<comment type="function">
    <text evidence="1">Plays an important role in the de novo pathway of purine nucleotide biosynthesis. Catalyzes the first committed step in the biosynthesis of AMP from IMP.</text>
</comment>
<comment type="catalytic activity">
    <reaction evidence="1">
        <text>IMP + L-aspartate + GTP = N(6)-(1,2-dicarboxyethyl)-AMP + GDP + phosphate + 2 H(+)</text>
        <dbReference type="Rhea" id="RHEA:15753"/>
        <dbReference type="ChEBI" id="CHEBI:15378"/>
        <dbReference type="ChEBI" id="CHEBI:29991"/>
        <dbReference type="ChEBI" id="CHEBI:37565"/>
        <dbReference type="ChEBI" id="CHEBI:43474"/>
        <dbReference type="ChEBI" id="CHEBI:57567"/>
        <dbReference type="ChEBI" id="CHEBI:58053"/>
        <dbReference type="ChEBI" id="CHEBI:58189"/>
        <dbReference type="EC" id="6.3.4.4"/>
    </reaction>
</comment>
<comment type="cofactor">
    <cofactor evidence="1">
        <name>Mg(2+)</name>
        <dbReference type="ChEBI" id="CHEBI:18420"/>
    </cofactor>
    <text evidence="1">Binds 1 Mg(2+) ion per subunit.</text>
</comment>
<comment type="pathway">
    <text evidence="1">Purine metabolism; AMP biosynthesis via de novo pathway; AMP from IMP: step 1/2.</text>
</comment>
<comment type="subunit">
    <text evidence="1">Homodimer.</text>
</comment>
<comment type="subcellular location">
    <subcellularLocation>
        <location evidence="1">Cytoplasm</location>
    </subcellularLocation>
</comment>
<comment type="similarity">
    <text evidence="1">Belongs to the adenylosuccinate synthetase family.</text>
</comment>
<dbReference type="EC" id="6.3.4.4" evidence="1"/>
<dbReference type="EMBL" id="CP000697">
    <property type="protein sequence ID" value="ABQ31975.1"/>
    <property type="molecule type" value="Genomic_DNA"/>
</dbReference>
<dbReference type="RefSeq" id="WP_012040310.1">
    <property type="nucleotide sequence ID" value="NC_009484.1"/>
</dbReference>
<dbReference type="SMR" id="A5G293"/>
<dbReference type="STRING" id="349163.Acry_2784"/>
<dbReference type="KEGG" id="acr:Acry_2784"/>
<dbReference type="eggNOG" id="COG0104">
    <property type="taxonomic scope" value="Bacteria"/>
</dbReference>
<dbReference type="HOGENOM" id="CLU_029848_0_0_5"/>
<dbReference type="UniPathway" id="UPA00075">
    <property type="reaction ID" value="UER00335"/>
</dbReference>
<dbReference type="Proteomes" id="UP000000245">
    <property type="component" value="Chromosome"/>
</dbReference>
<dbReference type="GO" id="GO:0005737">
    <property type="term" value="C:cytoplasm"/>
    <property type="evidence" value="ECO:0007669"/>
    <property type="project" value="UniProtKB-SubCell"/>
</dbReference>
<dbReference type="GO" id="GO:0004019">
    <property type="term" value="F:adenylosuccinate synthase activity"/>
    <property type="evidence" value="ECO:0007669"/>
    <property type="project" value="UniProtKB-UniRule"/>
</dbReference>
<dbReference type="GO" id="GO:0005525">
    <property type="term" value="F:GTP binding"/>
    <property type="evidence" value="ECO:0007669"/>
    <property type="project" value="UniProtKB-UniRule"/>
</dbReference>
<dbReference type="GO" id="GO:0000287">
    <property type="term" value="F:magnesium ion binding"/>
    <property type="evidence" value="ECO:0007669"/>
    <property type="project" value="UniProtKB-UniRule"/>
</dbReference>
<dbReference type="GO" id="GO:0044208">
    <property type="term" value="P:'de novo' AMP biosynthetic process"/>
    <property type="evidence" value="ECO:0007669"/>
    <property type="project" value="UniProtKB-UniRule"/>
</dbReference>
<dbReference type="GO" id="GO:0046040">
    <property type="term" value="P:IMP metabolic process"/>
    <property type="evidence" value="ECO:0007669"/>
    <property type="project" value="TreeGrafter"/>
</dbReference>
<dbReference type="CDD" id="cd03108">
    <property type="entry name" value="AdSS"/>
    <property type="match status" value="1"/>
</dbReference>
<dbReference type="FunFam" id="1.10.300.10:FF:000001">
    <property type="entry name" value="Adenylosuccinate synthetase"/>
    <property type="match status" value="1"/>
</dbReference>
<dbReference type="FunFam" id="3.90.170.10:FF:000001">
    <property type="entry name" value="Adenylosuccinate synthetase"/>
    <property type="match status" value="1"/>
</dbReference>
<dbReference type="Gene3D" id="3.40.440.10">
    <property type="entry name" value="Adenylosuccinate Synthetase, subunit A, domain 1"/>
    <property type="match status" value="1"/>
</dbReference>
<dbReference type="Gene3D" id="1.10.300.10">
    <property type="entry name" value="Adenylosuccinate Synthetase, subunit A, domain 2"/>
    <property type="match status" value="1"/>
</dbReference>
<dbReference type="Gene3D" id="3.90.170.10">
    <property type="entry name" value="Adenylosuccinate Synthetase, subunit A, domain 3"/>
    <property type="match status" value="1"/>
</dbReference>
<dbReference type="HAMAP" id="MF_00011">
    <property type="entry name" value="Adenylosucc_synth"/>
    <property type="match status" value="1"/>
</dbReference>
<dbReference type="InterPro" id="IPR018220">
    <property type="entry name" value="Adenylosuccin_syn_GTP-bd"/>
</dbReference>
<dbReference type="InterPro" id="IPR033128">
    <property type="entry name" value="Adenylosuccin_syn_Lys_AS"/>
</dbReference>
<dbReference type="InterPro" id="IPR042109">
    <property type="entry name" value="Adenylosuccinate_synth_dom1"/>
</dbReference>
<dbReference type="InterPro" id="IPR042110">
    <property type="entry name" value="Adenylosuccinate_synth_dom2"/>
</dbReference>
<dbReference type="InterPro" id="IPR042111">
    <property type="entry name" value="Adenylosuccinate_synth_dom3"/>
</dbReference>
<dbReference type="InterPro" id="IPR001114">
    <property type="entry name" value="Adenylosuccinate_synthetase"/>
</dbReference>
<dbReference type="InterPro" id="IPR027417">
    <property type="entry name" value="P-loop_NTPase"/>
</dbReference>
<dbReference type="NCBIfam" id="NF002223">
    <property type="entry name" value="PRK01117.1"/>
    <property type="match status" value="1"/>
</dbReference>
<dbReference type="NCBIfam" id="TIGR00184">
    <property type="entry name" value="purA"/>
    <property type="match status" value="1"/>
</dbReference>
<dbReference type="PANTHER" id="PTHR11846">
    <property type="entry name" value="ADENYLOSUCCINATE SYNTHETASE"/>
    <property type="match status" value="1"/>
</dbReference>
<dbReference type="PANTHER" id="PTHR11846:SF0">
    <property type="entry name" value="ADENYLOSUCCINATE SYNTHETASE"/>
    <property type="match status" value="1"/>
</dbReference>
<dbReference type="Pfam" id="PF00709">
    <property type="entry name" value="Adenylsucc_synt"/>
    <property type="match status" value="1"/>
</dbReference>
<dbReference type="SMART" id="SM00788">
    <property type="entry name" value="Adenylsucc_synt"/>
    <property type="match status" value="1"/>
</dbReference>
<dbReference type="SUPFAM" id="SSF52540">
    <property type="entry name" value="P-loop containing nucleoside triphosphate hydrolases"/>
    <property type="match status" value="1"/>
</dbReference>
<dbReference type="PROSITE" id="PS01266">
    <property type="entry name" value="ADENYLOSUCCIN_SYN_1"/>
    <property type="match status" value="1"/>
</dbReference>
<dbReference type="PROSITE" id="PS00513">
    <property type="entry name" value="ADENYLOSUCCIN_SYN_2"/>
    <property type="match status" value="1"/>
</dbReference>
<proteinExistence type="inferred from homology"/>
<protein>
    <recommendedName>
        <fullName evidence="1">Adenylosuccinate synthetase</fullName>
        <shortName evidence="1">AMPSase</shortName>
        <shortName evidence="1">AdSS</shortName>
        <ecNumber evidence="1">6.3.4.4</ecNumber>
    </recommendedName>
    <alternativeName>
        <fullName evidence="1">IMP--aspartate ligase</fullName>
    </alternativeName>
</protein>
<reference key="1">
    <citation type="submission" date="2007-05" db="EMBL/GenBank/DDBJ databases">
        <title>Complete sequence of chromosome of Acidiphilium cryptum JF-5.</title>
        <authorList>
            <consortium name="US DOE Joint Genome Institute"/>
            <person name="Copeland A."/>
            <person name="Lucas S."/>
            <person name="Lapidus A."/>
            <person name="Barry K."/>
            <person name="Detter J.C."/>
            <person name="Glavina del Rio T."/>
            <person name="Hammon N."/>
            <person name="Israni S."/>
            <person name="Dalin E."/>
            <person name="Tice H."/>
            <person name="Pitluck S."/>
            <person name="Sims D."/>
            <person name="Brettin T."/>
            <person name="Bruce D."/>
            <person name="Han C."/>
            <person name="Schmutz J."/>
            <person name="Larimer F."/>
            <person name="Land M."/>
            <person name="Hauser L."/>
            <person name="Kyrpides N."/>
            <person name="Kim E."/>
            <person name="Magnuson T."/>
            <person name="Richardson P."/>
        </authorList>
    </citation>
    <scope>NUCLEOTIDE SEQUENCE [LARGE SCALE GENOMIC DNA]</scope>
    <source>
        <strain>JF-5</strain>
    </source>
</reference>
<name>PURA_ACICJ</name>
<sequence>MANVTIIGAQWGDEGKGKVVDWLASRADVVVRFQGGHNAGHTLVVGNQTYKLSLLPSGLVRGKLGVIGNGVVVDPVALLAEIGRVREQGLNVTPETLRIADNAPLILPLHAALDAAREAARGARRIGTTGRGIGPAYEDKVARRAIRICDLAEPETLDWRLDELLLHHNTLLAGLGAPTFGKAELMDQLLALAPQILPFAEPVWERLAEAKKSGARILFEGAQAVMLDVDHGTYPFVTSSNTVSGQIAAGAGVGPDAAGRVLGIAKAYSTRVGSGPFPTEQDNETGRLLGERGHEFGTVTGRARRCGWFDAALVRQAVKVGGIQGLALTKLDVLDGMTTLQIGVGYRIGGETLPHLPPGAAAQAKAEPVYETIEGWSGSTRGARSYADLPAQAIKYVRRIEELVECPVTLLSTSPERDDTILMQDPFAD</sequence>
<evidence type="ECO:0000255" key="1">
    <source>
        <dbReference type="HAMAP-Rule" id="MF_00011"/>
    </source>
</evidence>
<accession>A5G293</accession>
<feature type="chain" id="PRO_1000000769" description="Adenylosuccinate synthetase">
    <location>
        <begin position="1"/>
        <end position="429"/>
    </location>
</feature>
<feature type="active site" description="Proton acceptor" evidence="1">
    <location>
        <position position="13"/>
    </location>
</feature>
<feature type="active site" description="Proton donor" evidence="1">
    <location>
        <position position="41"/>
    </location>
</feature>
<feature type="binding site" evidence="1">
    <location>
        <begin position="12"/>
        <end position="18"/>
    </location>
    <ligand>
        <name>GTP</name>
        <dbReference type="ChEBI" id="CHEBI:37565"/>
    </ligand>
</feature>
<feature type="binding site" description="in other chain" evidence="1">
    <location>
        <begin position="13"/>
        <end position="16"/>
    </location>
    <ligand>
        <name>IMP</name>
        <dbReference type="ChEBI" id="CHEBI:58053"/>
        <note>ligand shared between dimeric partners</note>
    </ligand>
</feature>
<feature type="binding site" evidence="1">
    <location>
        <position position="13"/>
    </location>
    <ligand>
        <name>Mg(2+)</name>
        <dbReference type="ChEBI" id="CHEBI:18420"/>
    </ligand>
</feature>
<feature type="binding site" description="in other chain" evidence="1">
    <location>
        <begin position="38"/>
        <end position="41"/>
    </location>
    <ligand>
        <name>IMP</name>
        <dbReference type="ChEBI" id="CHEBI:58053"/>
        <note>ligand shared between dimeric partners</note>
    </ligand>
</feature>
<feature type="binding site" evidence="1">
    <location>
        <begin position="40"/>
        <end position="42"/>
    </location>
    <ligand>
        <name>GTP</name>
        <dbReference type="ChEBI" id="CHEBI:37565"/>
    </ligand>
</feature>
<feature type="binding site" evidence="1">
    <location>
        <position position="40"/>
    </location>
    <ligand>
        <name>Mg(2+)</name>
        <dbReference type="ChEBI" id="CHEBI:18420"/>
    </ligand>
</feature>
<feature type="binding site" description="in other chain" evidence="1">
    <location>
        <position position="129"/>
    </location>
    <ligand>
        <name>IMP</name>
        <dbReference type="ChEBI" id="CHEBI:58053"/>
        <note>ligand shared between dimeric partners</note>
    </ligand>
</feature>
<feature type="binding site" evidence="1">
    <location>
        <position position="143"/>
    </location>
    <ligand>
        <name>IMP</name>
        <dbReference type="ChEBI" id="CHEBI:58053"/>
        <note>ligand shared between dimeric partners</note>
    </ligand>
</feature>
<feature type="binding site" description="in other chain" evidence="1">
    <location>
        <position position="223"/>
    </location>
    <ligand>
        <name>IMP</name>
        <dbReference type="ChEBI" id="CHEBI:58053"/>
        <note>ligand shared between dimeric partners</note>
    </ligand>
</feature>
<feature type="binding site" description="in other chain" evidence="1">
    <location>
        <position position="238"/>
    </location>
    <ligand>
        <name>IMP</name>
        <dbReference type="ChEBI" id="CHEBI:58053"/>
        <note>ligand shared between dimeric partners</note>
    </ligand>
</feature>
<feature type="binding site" evidence="1">
    <location>
        <begin position="298"/>
        <end position="304"/>
    </location>
    <ligand>
        <name>substrate</name>
    </ligand>
</feature>
<feature type="binding site" description="in other chain" evidence="1">
    <location>
        <position position="302"/>
    </location>
    <ligand>
        <name>IMP</name>
        <dbReference type="ChEBI" id="CHEBI:58053"/>
        <note>ligand shared between dimeric partners</note>
    </ligand>
</feature>
<feature type="binding site" evidence="1">
    <location>
        <position position="304"/>
    </location>
    <ligand>
        <name>GTP</name>
        <dbReference type="ChEBI" id="CHEBI:37565"/>
    </ligand>
</feature>
<feature type="binding site" evidence="1">
    <location>
        <begin position="330"/>
        <end position="332"/>
    </location>
    <ligand>
        <name>GTP</name>
        <dbReference type="ChEBI" id="CHEBI:37565"/>
    </ligand>
</feature>
<feature type="binding site" evidence="1">
    <location>
        <begin position="412"/>
        <end position="414"/>
    </location>
    <ligand>
        <name>GTP</name>
        <dbReference type="ChEBI" id="CHEBI:37565"/>
    </ligand>
</feature>
<organism>
    <name type="scientific">Acidiphilium cryptum (strain JF-5)</name>
    <dbReference type="NCBI Taxonomy" id="349163"/>
    <lineage>
        <taxon>Bacteria</taxon>
        <taxon>Pseudomonadati</taxon>
        <taxon>Pseudomonadota</taxon>
        <taxon>Alphaproteobacteria</taxon>
        <taxon>Acetobacterales</taxon>
        <taxon>Acidocellaceae</taxon>
        <taxon>Acidiphilium</taxon>
    </lineage>
</organism>
<gene>
    <name evidence="1" type="primary">purA</name>
    <name type="ordered locus">Acry_2784</name>
</gene>
<keyword id="KW-0963">Cytoplasm</keyword>
<keyword id="KW-0342">GTP-binding</keyword>
<keyword id="KW-0436">Ligase</keyword>
<keyword id="KW-0460">Magnesium</keyword>
<keyword id="KW-0479">Metal-binding</keyword>
<keyword id="KW-0547">Nucleotide-binding</keyword>
<keyword id="KW-0658">Purine biosynthesis</keyword>
<keyword id="KW-1185">Reference proteome</keyword>